<evidence type="ECO:0000250" key="1">
    <source>
        <dbReference type="UniProtKB" id="G4V4G2"/>
    </source>
</evidence>
<evidence type="ECO:0000305" key="2"/>
<protein>
    <recommendedName>
        <fullName>FAD assembly factor SdhE</fullName>
    </recommendedName>
</protein>
<gene>
    <name type="primary">sdhE</name>
    <name type="ordered locus">NTHI0720</name>
</gene>
<feature type="chain" id="PRO_0000214401" description="FAD assembly factor SdhE">
    <location>
        <begin position="1"/>
        <end position="85"/>
    </location>
</feature>
<reference key="1">
    <citation type="journal article" date="2005" name="J. Bacteriol.">
        <title>Genomic sequence of an otitis media isolate of nontypeable Haemophilus influenzae: comparative study with H. influenzae serotype d, strain KW20.</title>
        <authorList>
            <person name="Harrison A."/>
            <person name="Dyer D.W."/>
            <person name="Gillaspy A."/>
            <person name="Ray W.C."/>
            <person name="Mungur R."/>
            <person name="Carson M.B."/>
            <person name="Zhong H."/>
            <person name="Gipson J."/>
            <person name="Gipson M."/>
            <person name="Johnson L.S."/>
            <person name="Lewis L."/>
            <person name="Bakaletz L.O."/>
            <person name="Munson R.S. Jr."/>
        </authorList>
    </citation>
    <scope>NUCLEOTIDE SEQUENCE [LARGE SCALE GENOMIC DNA]</scope>
    <source>
        <strain>86-028NP</strain>
    </source>
</reference>
<accession>Q4QMW1</accession>
<name>SDHE_HAEI8</name>
<sequence>MEKYNKLRIEWDCRRGMLELDKIIMPFYLKHFDELTDDKKDIFIRLLASTDLQLFSWFFNRGKSSDSEIQSMVEYIQNVQKITTN</sequence>
<organism>
    <name type="scientific">Haemophilus influenzae (strain 86-028NP)</name>
    <dbReference type="NCBI Taxonomy" id="281310"/>
    <lineage>
        <taxon>Bacteria</taxon>
        <taxon>Pseudomonadati</taxon>
        <taxon>Pseudomonadota</taxon>
        <taxon>Gammaproteobacteria</taxon>
        <taxon>Pasteurellales</taxon>
        <taxon>Pasteurellaceae</taxon>
        <taxon>Haemophilus</taxon>
    </lineage>
</organism>
<dbReference type="EMBL" id="CP000057">
    <property type="protein sequence ID" value="AAX87636.1"/>
    <property type="molecule type" value="Genomic_DNA"/>
</dbReference>
<dbReference type="RefSeq" id="WP_005672506.1">
    <property type="nucleotide sequence ID" value="NC_007146.2"/>
</dbReference>
<dbReference type="SMR" id="Q4QMW1"/>
<dbReference type="GeneID" id="93219595"/>
<dbReference type="KEGG" id="hit:NTHI0720"/>
<dbReference type="HOGENOM" id="CLU_103054_2_2_6"/>
<dbReference type="Proteomes" id="UP000002525">
    <property type="component" value="Chromosome"/>
</dbReference>
<dbReference type="GO" id="GO:0005737">
    <property type="term" value="C:cytoplasm"/>
    <property type="evidence" value="ECO:0007669"/>
    <property type="project" value="UniProtKB-SubCell"/>
</dbReference>
<dbReference type="GO" id="GO:0006105">
    <property type="term" value="P:succinate metabolic process"/>
    <property type="evidence" value="ECO:0007669"/>
    <property type="project" value="TreeGrafter"/>
</dbReference>
<dbReference type="FunFam" id="1.10.150.250:FF:000001">
    <property type="entry name" value="FAD assembly factor SdhE"/>
    <property type="match status" value="1"/>
</dbReference>
<dbReference type="Gene3D" id="1.10.150.250">
    <property type="entry name" value="Flavinator of succinate dehydrogenase"/>
    <property type="match status" value="1"/>
</dbReference>
<dbReference type="InterPro" id="IPR005631">
    <property type="entry name" value="SDH"/>
</dbReference>
<dbReference type="InterPro" id="IPR036714">
    <property type="entry name" value="SDH_sf"/>
</dbReference>
<dbReference type="InterPro" id="IPR050531">
    <property type="entry name" value="SdhE_FAD_assembly_factor"/>
</dbReference>
<dbReference type="PANTHER" id="PTHR39585">
    <property type="entry name" value="FAD ASSEMBLY FACTOR SDHE"/>
    <property type="match status" value="1"/>
</dbReference>
<dbReference type="PANTHER" id="PTHR39585:SF1">
    <property type="entry name" value="FAD ASSEMBLY FACTOR SDHE"/>
    <property type="match status" value="1"/>
</dbReference>
<dbReference type="Pfam" id="PF03937">
    <property type="entry name" value="Sdh5"/>
    <property type="match status" value="1"/>
</dbReference>
<dbReference type="SUPFAM" id="SSF109910">
    <property type="entry name" value="YgfY-like"/>
    <property type="match status" value="1"/>
</dbReference>
<comment type="function">
    <text evidence="1">An FAD assembly protein, which accelerates covalent attachment of the cofactor into other proteins. Plays an essential role in the assembly of succinate dehydrogenase (SDH, respiratory complex II), an enzyme complex that is a component of both the tricarboxylic acid cycle and the electron transport chain, and which couples the oxidation of succinate to fumarate with the reduction of ubiquinone (coenzyme Q) to ubiquinol. Required for flavinylation (covalent attachment of FAD) of the flavoprotein subunit SdhA of SDH and other flavinylated proteins as well.</text>
</comment>
<comment type="subcellular location">
    <subcellularLocation>
        <location evidence="1">Cytoplasm</location>
    </subcellularLocation>
</comment>
<comment type="similarity">
    <text evidence="2">Belongs to the SdhE FAD assembly factor family.</text>
</comment>
<proteinExistence type="inferred from homology"/>
<keyword id="KW-0143">Chaperone</keyword>
<keyword id="KW-0963">Cytoplasm</keyword>